<name>TRUD_META3</name>
<comment type="function">
    <text evidence="1">Could be responsible for synthesis of pseudouridine from uracil-13 in transfer RNAs.</text>
</comment>
<comment type="catalytic activity">
    <reaction evidence="1">
        <text>uridine(13) in tRNA = pseudouridine(13) in tRNA</text>
        <dbReference type="Rhea" id="RHEA:42540"/>
        <dbReference type="Rhea" id="RHEA-COMP:10105"/>
        <dbReference type="Rhea" id="RHEA-COMP:10106"/>
        <dbReference type="ChEBI" id="CHEBI:65314"/>
        <dbReference type="ChEBI" id="CHEBI:65315"/>
        <dbReference type="EC" id="5.4.99.27"/>
    </reaction>
</comment>
<comment type="similarity">
    <text evidence="1">Belongs to the pseudouridine synthase TruD family.</text>
</comment>
<keyword id="KW-0413">Isomerase</keyword>
<keyword id="KW-0819">tRNA processing</keyword>
<feature type="chain" id="PRO_1000084749" description="Probable tRNA pseudouridine synthase D">
    <location>
        <begin position="1"/>
        <end position="402"/>
    </location>
</feature>
<feature type="domain" description="TRUD" evidence="1">
    <location>
        <begin position="175"/>
        <end position="364"/>
    </location>
</feature>
<feature type="active site" description="Nucleophile" evidence="1">
    <location>
        <position position="94"/>
    </location>
</feature>
<reference key="1">
    <citation type="submission" date="2007-06" db="EMBL/GenBank/DDBJ databases">
        <title>Complete sequence of Methanococcus aeolicus Nankai-3.</title>
        <authorList>
            <consortium name="US DOE Joint Genome Institute"/>
            <person name="Copeland A."/>
            <person name="Lucas S."/>
            <person name="Lapidus A."/>
            <person name="Barry K."/>
            <person name="Glavina del Rio T."/>
            <person name="Dalin E."/>
            <person name="Tice H."/>
            <person name="Pitluck S."/>
            <person name="Chain P."/>
            <person name="Malfatti S."/>
            <person name="Shin M."/>
            <person name="Vergez L."/>
            <person name="Schmutz J."/>
            <person name="Larimer F."/>
            <person name="Land M."/>
            <person name="Hauser L."/>
            <person name="Kyrpides N."/>
            <person name="Lykidis A."/>
            <person name="Sieprawska-Lupa M."/>
            <person name="Whitman W.B."/>
            <person name="Richardson P."/>
        </authorList>
    </citation>
    <scope>NUCLEOTIDE SEQUENCE [LARGE SCALE GENOMIC DNA]</scope>
    <source>
        <strain>ATCC BAA-1280 / DSM 17508 / OCM 812 / Nankai-3</strain>
    </source>
</reference>
<sequence length="402" mass="47013">MPLNLNCYLLNLKIDGVMKKYPEDFIVEEITPEGIVLEAGKDIGFKEENKHDWNGSFIHFTMEKINWNTMDAIRELARRTKTKRKNFGFAGTKDKFALTTQRVGCFGIKPEKLEEIKNSIKDITIRDIQKTNIKLRMGHLWGNKFTIKIRLNETDKYYNDISKYEEILKNKNLDYILNYYGTQRFGTFRPITHIVGKFIYNRDFESAFYTYCGAPINETGVVKEAREMVDNGEFEKALKLFPKKSYYNEIKMIRHYIKTGNYKECFKVLPPQLSSMFVNAYQSYLFNEMINIRHRDYSFDILDGDVVEEGAPTGNILGSDTILSDGIQGDIEKYIIEKENLDLKKFKIEDYGNFPGTRRKLITKIYDFESSIDKDNNIISISFKMERGNYATVVLREIISEI</sequence>
<proteinExistence type="inferred from homology"/>
<gene>
    <name evidence="1" type="primary">truD</name>
    <name type="ordered locus">Maeo_0756</name>
</gene>
<organism>
    <name type="scientific">Methanococcus aeolicus (strain ATCC BAA-1280 / DSM 17508 / OCM 812 / Nankai-3)</name>
    <dbReference type="NCBI Taxonomy" id="419665"/>
    <lineage>
        <taxon>Archaea</taxon>
        <taxon>Methanobacteriati</taxon>
        <taxon>Methanobacteriota</taxon>
        <taxon>Methanomada group</taxon>
        <taxon>Methanococci</taxon>
        <taxon>Methanococcales</taxon>
        <taxon>Methanococcaceae</taxon>
        <taxon>Methanococcus</taxon>
    </lineage>
</organism>
<protein>
    <recommendedName>
        <fullName evidence="1">Probable tRNA pseudouridine synthase D</fullName>
        <ecNumber evidence="1">5.4.99.27</ecNumber>
    </recommendedName>
    <alternativeName>
        <fullName evidence="1">tRNA pseudouridine(13) synthase</fullName>
    </alternativeName>
    <alternativeName>
        <fullName evidence="1">tRNA pseudouridylate synthase D</fullName>
    </alternativeName>
    <alternativeName>
        <fullName evidence="1">tRNA-uridine isomerase D</fullName>
    </alternativeName>
</protein>
<accession>A6UV17</accession>
<dbReference type="EC" id="5.4.99.27" evidence="1"/>
<dbReference type="EMBL" id="CP000743">
    <property type="protein sequence ID" value="ABR56339.1"/>
    <property type="molecule type" value="Genomic_DNA"/>
</dbReference>
<dbReference type="SMR" id="A6UV17"/>
<dbReference type="STRING" id="419665.Maeo_0756"/>
<dbReference type="KEGG" id="mae:Maeo_0756"/>
<dbReference type="eggNOG" id="arCOG04252">
    <property type="taxonomic scope" value="Archaea"/>
</dbReference>
<dbReference type="HOGENOM" id="CLU_005281_4_1_2"/>
<dbReference type="Proteomes" id="UP000001106">
    <property type="component" value="Chromosome"/>
</dbReference>
<dbReference type="GO" id="GO:0003723">
    <property type="term" value="F:RNA binding"/>
    <property type="evidence" value="ECO:0007669"/>
    <property type="project" value="InterPro"/>
</dbReference>
<dbReference type="GO" id="GO:0160150">
    <property type="term" value="F:tRNA pseudouridine(13) synthase activity"/>
    <property type="evidence" value="ECO:0007669"/>
    <property type="project" value="UniProtKB-EC"/>
</dbReference>
<dbReference type="GO" id="GO:0031119">
    <property type="term" value="P:tRNA pseudouridine synthesis"/>
    <property type="evidence" value="ECO:0007669"/>
    <property type="project" value="UniProtKB-UniRule"/>
</dbReference>
<dbReference type="Gene3D" id="3.30.2350.20">
    <property type="entry name" value="TruD, catalytic domain"/>
    <property type="match status" value="3"/>
</dbReference>
<dbReference type="HAMAP" id="MF_01082">
    <property type="entry name" value="TruD"/>
    <property type="match status" value="1"/>
</dbReference>
<dbReference type="InterPro" id="IPR020103">
    <property type="entry name" value="PsdUridine_synth_cat_dom_sf"/>
</dbReference>
<dbReference type="InterPro" id="IPR001656">
    <property type="entry name" value="PsdUridine_synth_TruD"/>
</dbReference>
<dbReference type="InterPro" id="IPR020119">
    <property type="entry name" value="PsdUridine_synth_TruD_CS"/>
</dbReference>
<dbReference type="InterPro" id="IPR011760">
    <property type="entry name" value="PsdUridine_synth_TruD_insert"/>
</dbReference>
<dbReference type="InterPro" id="IPR042214">
    <property type="entry name" value="TruD_catalytic"/>
</dbReference>
<dbReference type="NCBIfam" id="TIGR00094">
    <property type="entry name" value="tRNA_TruD_broad"/>
    <property type="match status" value="1"/>
</dbReference>
<dbReference type="PANTHER" id="PTHR13326:SF21">
    <property type="entry name" value="PSEUDOURIDYLATE SYNTHASE PUS7L"/>
    <property type="match status" value="1"/>
</dbReference>
<dbReference type="PANTHER" id="PTHR13326">
    <property type="entry name" value="TRNA PSEUDOURIDINE SYNTHASE D"/>
    <property type="match status" value="1"/>
</dbReference>
<dbReference type="Pfam" id="PF01142">
    <property type="entry name" value="TruD"/>
    <property type="match status" value="2"/>
</dbReference>
<dbReference type="PIRSF" id="PIRSF037016">
    <property type="entry name" value="Pseudouridin_synth_euk_prd"/>
    <property type="match status" value="1"/>
</dbReference>
<dbReference type="SUPFAM" id="SSF55120">
    <property type="entry name" value="Pseudouridine synthase"/>
    <property type="match status" value="1"/>
</dbReference>
<dbReference type="PROSITE" id="PS50984">
    <property type="entry name" value="TRUD"/>
    <property type="match status" value="1"/>
</dbReference>
<dbReference type="PROSITE" id="PS01268">
    <property type="entry name" value="UPF0024"/>
    <property type="match status" value="1"/>
</dbReference>
<evidence type="ECO:0000255" key="1">
    <source>
        <dbReference type="HAMAP-Rule" id="MF_01082"/>
    </source>
</evidence>